<dbReference type="EMBL" id="U09771">
    <property type="protein sequence ID" value="AAB48849.1"/>
    <property type="molecule type" value="Genomic_DNA"/>
</dbReference>
<dbReference type="SMR" id="P45517"/>
<dbReference type="STRING" id="1333848.CFNIH1_02615"/>
<dbReference type="Gene3D" id="3.30.450.150">
    <property type="entry name" value="Haem-degrading domain"/>
    <property type="match status" value="1"/>
</dbReference>
<dbReference type="InterPro" id="IPR052517">
    <property type="entry name" value="GlcG_carb_metab_protein"/>
</dbReference>
<dbReference type="InterPro" id="IPR005624">
    <property type="entry name" value="PduO/GlcC-like"/>
</dbReference>
<dbReference type="InterPro" id="IPR038084">
    <property type="entry name" value="PduO/GlcC-like_sf"/>
</dbReference>
<dbReference type="PANTHER" id="PTHR34309:SF1">
    <property type="entry name" value="PROTEIN GLCG"/>
    <property type="match status" value="1"/>
</dbReference>
<dbReference type="PANTHER" id="PTHR34309">
    <property type="entry name" value="SLR1406 PROTEIN"/>
    <property type="match status" value="1"/>
</dbReference>
<dbReference type="Pfam" id="PF03928">
    <property type="entry name" value="HbpS-like"/>
    <property type="match status" value="1"/>
</dbReference>
<dbReference type="SUPFAM" id="SSF143744">
    <property type="entry name" value="GlcG-like"/>
    <property type="match status" value="1"/>
</dbReference>
<proteinExistence type="inferred from homology"/>
<name>YDHY_CITFR</name>
<organism>
    <name type="scientific">Citrobacter freundii</name>
    <dbReference type="NCBI Taxonomy" id="546"/>
    <lineage>
        <taxon>Bacteria</taxon>
        <taxon>Pseudomonadati</taxon>
        <taxon>Pseudomonadota</taxon>
        <taxon>Gammaproteobacteria</taxon>
        <taxon>Enterobacterales</taxon>
        <taxon>Enterobacteriaceae</taxon>
        <taxon>Citrobacter</taxon>
        <taxon>Citrobacter freundii complex</taxon>
    </lineage>
</organism>
<evidence type="ECO:0000305" key="1"/>
<accession>P45517</accession>
<comment type="similarity">
    <text evidence="1">Belongs to the GlcG family.</text>
</comment>
<feature type="chain" id="PRO_0000066195" description="Uncharacterized 15.0 kDa protein in dhaT-dhaS intergenic region">
    <location>
        <begin position="1"/>
        <end position="142"/>
    </location>
</feature>
<protein>
    <recommendedName>
        <fullName>Uncharacterized 15.0 kDa protein in dhaT-dhaS intergenic region</fullName>
    </recommendedName>
    <alternativeName>
        <fullName>ORFY</fullName>
    </alternativeName>
</protein>
<reference key="1">
    <citation type="submission" date="1994-05" db="EMBL/GenBank/DDBJ databases">
        <authorList>
            <person name="Daniel R."/>
            <person name="Gottschalk G."/>
        </authorList>
    </citation>
    <scope>NUCLEOTIDE SEQUENCE [GENOMIC DNA]</scope>
    <source>
        <strain>ATCC 6750 / DSM 30040 / NCIB 8173 / M8BK</strain>
    </source>
</reference>
<sequence>MNKSQQIATITLAAAKKMAQAVEAKALEINVPVVFSVVDHGGNTLLMQRMDDAFVTSCDISLNKAYTACCLRQGTHEITDAVQPGASLYGLQLTNQQRIVIFGGGLPVILNGKVIGAVGVSGGTVEQDRLLAETALDCFSEL</sequence>